<sequence length="243" mass="26478">MEQSSNRPEDFPLNVFSVTPYTPSTADIQVSDDDKAGATLLFSGIFLGLVGITFTVMGWIKYQGVSHFEWTQLLGPILLSVGVTFILISVCKFKMLSCQLCTDNEERVLDSDQTSGGQSFVFTGINQPITFHGATVVQYIPPPYGSQEPLGMNTTYLQPMMNPCGLVPSSGAVAATPSPPQYYTIYPQDNAAFVESEGFSPFVGAGHDRPSSDADQLEGTQMGEEERVCFSPPPYEEIYALPR</sequence>
<keyword id="KW-1003">Cell membrane</keyword>
<keyword id="KW-0256">Endoplasmic reticulum</keyword>
<keyword id="KW-0472">Membrane</keyword>
<keyword id="KW-1185">Reference proteome</keyword>
<keyword id="KW-0812">Transmembrane</keyword>
<keyword id="KW-1133">Transmembrane helix</keyword>
<feature type="chain" id="PRO_0000282580" description="Transmembrane protein 174">
    <location>
        <begin position="1"/>
        <end position="243"/>
    </location>
</feature>
<feature type="transmembrane region" description="Helical" evidence="3">
    <location>
        <begin position="40"/>
        <end position="60"/>
    </location>
</feature>
<feature type="transmembrane region" description="Helical" evidence="3">
    <location>
        <begin position="73"/>
        <end position="93"/>
    </location>
</feature>
<feature type="region of interest" description="Disordered" evidence="4">
    <location>
        <begin position="205"/>
        <end position="229"/>
    </location>
</feature>
<evidence type="ECO:0000250" key="1">
    <source>
        <dbReference type="UniProtKB" id="Q8WUU8"/>
    </source>
</evidence>
<evidence type="ECO:0000250" key="2">
    <source>
        <dbReference type="UniProtKB" id="Q9DCX7"/>
    </source>
</evidence>
<evidence type="ECO:0000255" key="3"/>
<evidence type="ECO:0000256" key="4">
    <source>
        <dbReference type="SAM" id="MobiDB-lite"/>
    </source>
</evidence>
<evidence type="ECO:0000305" key="5"/>
<gene>
    <name type="primary">Tmem174</name>
</gene>
<reference key="1">
    <citation type="journal article" date="2004" name="Genome Res.">
        <title>The status, quality, and expansion of the NIH full-length cDNA project: the Mammalian Gene Collection (MGC).</title>
        <authorList>
            <consortium name="The MGC Project Team"/>
        </authorList>
    </citation>
    <scope>NUCLEOTIDE SEQUENCE [LARGE SCALE MRNA]</scope>
    <source>
        <tissue>Kidney</tissue>
    </source>
</reference>
<accession>Q68FU0</accession>
<proteinExistence type="evidence at transcript level"/>
<comment type="function">
    <text evidence="2">Regulator of plasma phosphate homeostasis. Decreases serum inorganic phosphate (Pi) uptake by regulating the sodium-phosphate cotransporter SLC34A1 trafficking by PTH and FGF23 in the kidney.</text>
</comment>
<comment type="subunit">
    <text evidence="2">Interacts with SLC34A1; regulates SLC34A1 internalization by PTH and FGF23.</text>
</comment>
<comment type="subcellular location">
    <subcellularLocation>
        <location evidence="1">Endoplasmic reticulum membrane</location>
        <topology evidence="3">Multi-pass membrane protein</topology>
    </subcellularLocation>
    <subcellularLocation>
        <location evidence="1">Apical cell membrane</location>
        <topology evidence="3">Multi-pass membrane protein</topology>
    </subcellularLocation>
</comment>
<comment type="caution">
    <text evidence="1 5">A previous study found the localization of TMEM174 in the endoplasmic reticulum (By similarity). A more recent study detected TMEM174 in cell membrane (By similarity). The difference between these two studies could be due to the use of different cell lines.</text>
</comment>
<organism>
    <name type="scientific">Rattus norvegicus</name>
    <name type="common">Rat</name>
    <dbReference type="NCBI Taxonomy" id="10116"/>
    <lineage>
        <taxon>Eukaryota</taxon>
        <taxon>Metazoa</taxon>
        <taxon>Chordata</taxon>
        <taxon>Craniata</taxon>
        <taxon>Vertebrata</taxon>
        <taxon>Euteleostomi</taxon>
        <taxon>Mammalia</taxon>
        <taxon>Eutheria</taxon>
        <taxon>Euarchontoglires</taxon>
        <taxon>Glires</taxon>
        <taxon>Rodentia</taxon>
        <taxon>Myomorpha</taxon>
        <taxon>Muroidea</taxon>
        <taxon>Muridae</taxon>
        <taxon>Murinae</taxon>
        <taxon>Rattus</taxon>
    </lineage>
</organism>
<protein>
    <recommendedName>
        <fullName>Transmembrane protein 174</fullName>
    </recommendedName>
</protein>
<name>TM174_RAT</name>
<dbReference type="EMBL" id="BC079357">
    <property type="protein sequence ID" value="AAH79357.1"/>
    <property type="molecule type" value="mRNA"/>
</dbReference>
<dbReference type="RefSeq" id="NP_001019469.1">
    <property type="nucleotide sequence ID" value="NM_001024298.1"/>
</dbReference>
<dbReference type="RefSeq" id="XP_063138415.1">
    <property type="nucleotide sequence ID" value="XM_063282345.1"/>
</dbReference>
<dbReference type="FunCoup" id="Q68FU0">
    <property type="interactions" value="2"/>
</dbReference>
<dbReference type="STRING" id="10116.ENSRNOP00000020879"/>
<dbReference type="GlyGen" id="Q68FU0">
    <property type="glycosylation" value="1 site"/>
</dbReference>
<dbReference type="PhosphoSitePlus" id="Q68FU0"/>
<dbReference type="PaxDb" id="10116-ENSRNOP00000020879"/>
<dbReference type="Ensembl" id="ENSRNOT00000020879.6">
    <property type="protein sequence ID" value="ENSRNOP00000020879.3"/>
    <property type="gene ID" value="ENSRNOG00000015472.6"/>
</dbReference>
<dbReference type="GeneID" id="499516"/>
<dbReference type="KEGG" id="rno:499516"/>
<dbReference type="UCSC" id="RGD:1561129">
    <property type="organism name" value="rat"/>
</dbReference>
<dbReference type="AGR" id="RGD:1561129"/>
<dbReference type="CTD" id="134288"/>
<dbReference type="RGD" id="1561129">
    <property type="gene designation" value="Tmem174"/>
</dbReference>
<dbReference type="eggNOG" id="ENOG502RZ98">
    <property type="taxonomic scope" value="Eukaryota"/>
</dbReference>
<dbReference type="GeneTree" id="ENSGT00390000004161"/>
<dbReference type="HOGENOM" id="CLU_099888_0_0_1"/>
<dbReference type="InParanoid" id="Q68FU0"/>
<dbReference type="OMA" id="YYTIYPP"/>
<dbReference type="OrthoDB" id="9931655at2759"/>
<dbReference type="PhylomeDB" id="Q68FU0"/>
<dbReference type="TreeFam" id="TF335512"/>
<dbReference type="PRO" id="PR:Q68FU0"/>
<dbReference type="Proteomes" id="UP000002494">
    <property type="component" value="Chromosome 2"/>
</dbReference>
<dbReference type="Bgee" id="ENSRNOG00000015472">
    <property type="expression patterns" value="Expressed in adult mammalian kidney and 3 other cell types or tissues"/>
</dbReference>
<dbReference type="GO" id="GO:0016324">
    <property type="term" value="C:apical plasma membrane"/>
    <property type="evidence" value="ECO:0000314"/>
    <property type="project" value="UniProtKB"/>
</dbReference>
<dbReference type="GO" id="GO:0005789">
    <property type="term" value="C:endoplasmic reticulum membrane"/>
    <property type="evidence" value="ECO:0000266"/>
    <property type="project" value="RGD"/>
</dbReference>
<dbReference type="GO" id="GO:0055062">
    <property type="term" value="P:phosphate ion homeostasis"/>
    <property type="evidence" value="ECO:0000250"/>
    <property type="project" value="UniProtKB"/>
</dbReference>
<dbReference type="InterPro" id="IPR027835">
    <property type="entry name" value="TMEM174"/>
</dbReference>
<dbReference type="PANTHER" id="PTHR31020">
    <property type="entry name" value="TRANSMEMBRANE PROTEIN 174"/>
    <property type="match status" value="1"/>
</dbReference>
<dbReference type="PANTHER" id="PTHR31020:SF1">
    <property type="entry name" value="TRANSMEMBRANE PROTEIN 174"/>
    <property type="match status" value="1"/>
</dbReference>
<dbReference type="Pfam" id="PF15029">
    <property type="entry name" value="TMEM174"/>
    <property type="match status" value="1"/>
</dbReference>